<comment type="function">
    <text evidence="1">Plays a major role in the induction and maintenance of cellular transformation. E6 associates with host UBE3A/E6-AP ubiquitin-protein ligase and modulates its activity. Protects host keratinocytes from apoptosis by mediating the degradation of host BAK1. May also inhibit host immune response.</text>
</comment>
<comment type="subunit">
    <text evidence="1">Forms homodimers. Interacts with ubiquitin-protein ligase UBE3A/E6-AP; this interaction stimulates UBE3A ubiquitin activity. Interacts with host BAK1.</text>
</comment>
<comment type="subcellular location">
    <subcellularLocation>
        <location evidence="1">Host cytoplasm</location>
    </subcellularLocation>
    <subcellularLocation>
        <location evidence="1">Host nucleus</location>
    </subcellularLocation>
</comment>
<comment type="similarity">
    <text evidence="1 2">Belongs to the papillomaviridae E6 protein family.</text>
</comment>
<reference key="1">
    <citation type="journal article" date="1985" name="Proc. Natl. Acad. Sci. U.S.A.">
        <title>Genomic structure of the cottontail rabbit (Shope) papillomavirus.</title>
        <authorList>
            <person name="Giri I."/>
            <person name="Danos O."/>
            <person name="Yaniv M."/>
        </authorList>
    </citation>
    <scope>NUCLEOTIDE SEQUENCE [GENOMIC DNA]</scope>
</reference>
<organismHost>
    <name type="scientific">Sylvilagus floridanus</name>
    <name type="common">Cottontail rabbit</name>
    <dbReference type="NCBI Taxonomy" id="9988"/>
</organismHost>
<evidence type="ECO:0000255" key="1">
    <source>
        <dbReference type="HAMAP-Rule" id="MF_04006"/>
    </source>
</evidence>
<evidence type="ECO:0000305" key="2"/>
<feature type="chain" id="PRO_0000133386" description="Protein E6">
    <location>
        <begin position="1"/>
        <end position="273"/>
    </location>
</feature>
<feature type="zinc finger region" evidence="1">
    <location>
        <begin position="27"/>
        <end position="63"/>
    </location>
</feature>
<feature type="zinc finger region" evidence="1">
    <location>
        <begin position="100"/>
        <end position="140"/>
    </location>
</feature>
<dbReference type="EMBL" id="K02708">
    <property type="status" value="NOT_ANNOTATED_CDS"/>
    <property type="molecule type" value="Genomic_DNA"/>
</dbReference>
<dbReference type="SMR" id="P03127"/>
<dbReference type="IntAct" id="P03127">
    <property type="interactions" value="2"/>
</dbReference>
<dbReference type="MINT" id="P03127"/>
<dbReference type="Proteomes" id="UP000008787">
    <property type="component" value="Segment"/>
</dbReference>
<dbReference type="GO" id="GO:0030430">
    <property type="term" value="C:host cell cytoplasm"/>
    <property type="evidence" value="ECO:0007669"/>
    <property type="project" value="UniProtKB-SubCell"/>
</dbReference>
<dbReference type="GO" id="GO:0042025">
    <property type="term" value="C:host cell nucleus"/>
    <property type="evidence" value="ECO:0007669"/>
    <property type="project" value="UniProtKB-SubCell"/>
</dbReference>
<dbReference type="GO" id="GO:0003677">
    <property type="term" value="F:DNA binding"/>
    <property type="evidence" value="ECO:0007669"/>
    <property type="project" value="UniProtKB-UniRule"/>
</dbReference>
<dbReference type="GO" id="GO:0008270">
    <property type="term" value="F:zinc ion binding"/>
    <property type="evidence" value="ECO:0007669"/>
    <property type="project" value="UniProtKB-KW"/>
</dbReference>
<dbReference type="GO" id="GO:0006351">
    <property type="term" value="P:DNA-templated transcription"/>
    <property type="evidence" value="ECO:0007669"/>
    <property type="project" value="UniProtKB-UniRule"/>
</dbReference>
<dbReference type="GO" id="GO:0006355">
    <property type="term" value="P:regulation of DNA-templated transcription"/>
    <property type="evidence" value="ECO:0007669"/>
    <property type="project" value="UniProtKB-UniRule"/>
</dbReference>
<dbReference type="GO" id="GO:0052150">
    <property type="term" value="P:symbiont-mediated perturbation of host apoptosis"/>
    <property type="evidence" value="ECO:0007669"/>
    <property type="project" value="UniProtKB-KW"/>
</dbReference>
<dbReference type="GO" id="GO:0039648">
    <property type="term" value="P:symbiont-mediated perturbation of host ubiquitin-like protein modification"/>
    <property type="evidence" value="ECO:0007669"/>
    <property type="project" value="UniProtKB-UniRule"/>
</dbReference>
<dbReference type="GO" id="GO:0052170">
    <property type="term" value="P:symbiont-mediated suppression of host innate immune response"/>
    <property type="evidence" value="ECO:0007669"/>
    <property type="project" value="UniProtKB-KW"/>
</dbReference>
<dbReference type="GO" id="GO:0039502">
    <property type="term" value="P:symbiont-mediated suppression of host type I interferon-mediated signaling pathway"/>
    <property type="evidence" value="ECO:0007669"/>
    <property type="project" value="UniProtKB-UniRule"/>
</dbReference>
<dbReference type="Gene3D" id="3.30.240.40">
    <property type="entry name" value="E6 early regulatory protein"/>
    <property type="match status" value="2"/>
</dbReference>
<dbReference type="HAMAP" id="MF_04006">
    <property type="entry name" value="HPV_E6"/>
    <property type="match status" value="1"/>
</dbReference>
<dbReference type="InterPro" id="IPR001334">
    <property type="entry name" value="E6"/>
</dbReference>
<dbReference type="InterPro" id="IPR038575">
    <property type="entry name" value="E6_sf"/>
</dbReference>
<dbReference type="Pfam" id="PF00518">
    <property type="entry name" value="E6"/>
    <property type="match status" value="1"/>
</dbReference>
<dbReference type="SUPFAM" id="SSF161229">
    <property type="entry name" value="E6 C-terminal domain-like"/>
    <property type="match status" value="2"/>
</dbReference>
<keyword id="KW-0010">Activator</keyword>
<keyword id="KW-0238">DNA-binding</keyword>
<keyword id="KW-0244">Early protein</keyword>
<keyword id="KW-1035">Host cytoplasm</keyword>
<keyword id="KW-1048">Host nucleus</keyword>
<keyword id="KW-0945">Host-virus interaction</keyword>
<keyword id="KW-1090">Inhibition of host innate immune response by virus</keyword>
<keyword id="KW-0479">Metal-binding</keyword>
<keyword id="KW-1119">Modulation of host cell apoptosis by virus</keyword>
<keyword id="KW-1185">Reference proteome</keyword>
<keyword id="KW-0804">Transcription</keyword>
<keyword id="KW-0805">Transcription regulation</keyword>
<keyword id="KW-0899">Viral immunoevasion</keyword>
<keyword id="KW-0862">Zinc</keyword>
<keyword id="KW-0863">Zinc-finger</keyword>
<accession>P03127</accession>
<sequence length="273" mass="29736">MENCLPRSLEKLQQILQISLEDLPFGCIFCGKLLGAAEKQLFKCTGLCIVWHKGWPYGTCRDCTVLSCALDLYCHLALTAPALEAEALVGQEISSWFMRCTVCGRRLTIPEKIELRARNCTLCCIDKGQYFQWRGHCSSCKLSDQGDLGGYPPSPGSRCGECDECCVPDLTHLTPVDLEELGLYPGPEGTYPDLVDLGPGVFGEEDEEGGGLFDSFEEEDPGPNQCGCFFCTSYPSGTGDTDINQGPAGAAGIALQSDPVCFCENCINFTEFR</sequence>
<name>VE6_CRPVK</name>
<protein>
    <recommendedName>
        <fullName evidence="1">Protein E6</fullName>
    </recommendedName>
</protein>
<organism>
    <name type="scientific">Cottontail rabbit papillomavirus (strain Kansas)</name>
    <name type="common">CRPV</name>
    <name type="synonym">Papillomavirus sylvilagi</name>
    <dbReference type="NCBI Taxonomy" id="31553"/>
    <lineage>
        <taxon>Viruses</taxon>
        <taxon>Monodnaviria</taxon>
        <taxon>Shotokuvirae</taxon>
        <taxon>Cossaviricota</taxon>
        <taxon>Papovaviricetes</taxon>
        <taxon>Zurhausenvirales</taxon>
        <taxon>Papillomaviridae</taxon>
        <taxon>Firstpapillomavirinae</taxon>
        <taxon>Kappapapillomavirus</taxon>
        <taxon>Kappapapillomavirus 2</taxon>
    </lineage>
</organism>
<proteinExistence type="inferred from homology"/>
<gene>
    <name evidence="1" type="primary">E6</name>
</gene>